<protein>
    <recommendedName>
        <fullName evidence="1">Mitochondrial distribution and morphology protein 10</fullName>
    </recommendedName>
    <alternativeName>
        <fullName evidence="1">Mitochondrial inheritance component MDM10</fullName>
    </alternativeName>
</protein>
<proteinExistence type="inferred from homology"/>
<comment type="function">
    <text evidence="1">Component of the ERMES/MDM complex, which serves as a molecular tether to connect the endoplasmic reticulum and mitochondria. Components of this complex are involved in the control of mitochondrial shape and protein biogenesis and may function in phospholipid exchange. MDM10 is involved in the late assembly steps of the general translocase of the mitochondrial outer membrane (TOM complex). Functions in the TOM40-specific route of the assembly of outer membrane beta-barrel proteins, including the association of TOM40 with the receptor TOM22 and small TOM proteins. Can associate with the SAM(core) complex as well as the MDM12-MMM1 complex, both involved in late steps of the major beta-barrel assembly pathway, that is responsible for biogenesis of all outer membrane beta-barrel proteins. May act as a switch that shuttles between both complexes and channels precursor proteins into the TOM40-specific pathway. Plays a role in mitochondrial morphology and in the inheritance of mitochondria.</text>
</comment>
<comment type="subunit">
    <text evidence="1">Component of the ER-mitochondria encounter structure (ERMES) or MDM complex, composed of MMM1, MDM10, MDM12 and MDM34. Associates with the mitochondrial outer membrane sorting assembly machinery SAM(core) complex.</text>
</comment>
<comment type="subcellular location">
    <subcellularLocation>
        <location evidence="1">Mitochondrion outer membrane</location>
        <topology evidence="1">Multi-pass membrane protein</topology>
    </subcellularLocation>
    <text evidence="1">The ERMES/MDM complex localizes to a few discrete foci (around 10 per single cell), that represent mitochondria-endoplasmic reticulum junctions. These foci are often found next to mtDNA nucleoids.</text>
</comment>
<comment type="domain">
    <text>Lacks alpha-helical transmembrane segments, suggesting that it resides in the membrane via beta-sheet conformations similar to those predicted for other outer membrane proteins and porin.</text>
</comment>
<comment type="similarity">
    <text evidence="1">Belongs to the MDM10 family.</text>
</comment>
<accession>B0DK33</accession>
<gene>
    <name evidence="1" type="primary">MDM10</name>
    <name type="ORF">LACBIDRAFT_303697</name>
</gene>
<organism>
    <name type="scientific">Laccaria bicolor (strain S238N-H82 / ATCC MYA-4686)</name>
    <name type="common">Bicoloured deceiver</name>
    <name type="synonym">Laccaria laccata var. bicolor</name>
    <dbReference type="NCBI Taxonomy" id="486041"/>
    <lineage>
        <taxon>Eukaryota</taxon>
        <taxon>Fungi</taxon>
        <taxon>Dikarya</taxon>
        <taxon>Basidiomycota</taxon>
        <taxon>Agaricomycotina</taxon>
        <taxon>Agaricomycetes</taxon>
        <taxon>Agaricomycetidae</taxon>
        <taxon>Agaricales</taxon>
        <taxon>Agaricineae</taxon>
        <taxon>Hydnangiaceae</taxon>
        <taxon>Laccaria</taxon>
    </lineage>
</organism>
<dbReference type="EMBL" id="DS547115">
    <property type="protein sequence ID" value="EDR04871.1"/>
    <property type="molecule type" value="Genomic_DNA"/>
</dbReference>
<dbReference type="RefSeq" id="XP_001884261.1">
    <property type="nucleotide sequence ID" value="XM_001884226.1"/>
</dbReference>
<dbReference type="SMR" id="B0DK33"/>
<dbReference type="FunCoup" id="B0DK33">
    <property type="interactions" value="43"/>
</dbReference>
<dbReference type="STRING" id="486041.B0DK33"/>
<dbReference type="GeneID" id="6080060"/>
<dbReference type="KEGG" id="lbc:LACBIDRAFT_303697"/>
<dbReference type="HOGENOM" id="CLU_026505_2_0_1"/>
<dbReference type="InParanoid" id="B0DK33"/>
<dbReference type="OrthoDB" id="2103793at2759"/>
<dbReference type="Proteomes" id="UP000001194">
    <property type="component" value="Unassembled WGS sequence"/>
</dbReference>
<dbReference type="GO" id="GO:0032865">
    <property type="term" value="C:ERMES complex"/>
    <property type="evidence" value="ECO:0007669"/>
    <property type="project" value="UniProtKB-UniRule"/>
</dbReference>
<dbReference type="GO" id="GO:0001401">
    <property type="term" value="C:SAM complex"/>
    <property type="evidence" value="ECO:0007669"/>
    <property type="project" value="TreeGrafter"/>
</dbReference>
<dbReference type="GO" id="GO:0051654">
    <property type="term" value="P:establishment of mitochondrion localization"/>
    <property type="evidence" value="ECO:0007669"/>
    <property type="project" value="TreeGrafter"/>
</dbReference>
<dbReference type="GO" id="GO:0000002">
    <property type="term" value="P:mitochondrial genome maintenance"/>
    <property type="evidence" value="ECO:0007669"/>
    <property type="project" value="UniProtKB-UniRule"/>
</dbReference>
<dbReference type="GO" id="GO:0070096">
    <property type="term" value="P:mitochondrial outer membrane translocase complex assembly"/>
    <property type="evidence" value="ECO:0007669"/>
    <property type="project" value="UniProtKB-UniRule"/>
</dbReference>
<dbReference type="GO" id="GO:1990456">
    <property type="term" value="P:mitochondrion-endoplasmic reticulum membrane tethering"/>
    <property type="evidence" value="ECO:0007669"/>
    <property type="project" value="UniProtKB-UniRule"/>
</dbReference>
<dbReference type="GO" id="GO:0015914">
    <property type="term" value="P:phospholipid transport"/>
    <property type="evidence" value="ECO:0007669"/>
    <property type="project" value="TreeGrafter"/>
</dbReference>
<dbReference type="GO" id="GO:0045040">
    <property type="term" value="P:protein insertion into mitochondrial outer membrane"/>
    <property type="evidence" value="ECO:0007669"/>
    <property type="project" value="UniProtKB-UniRule"/>
</dbReference>
<dbReference type="HAMAP" id="MF_03102">
    <property type="entry name" value="Mdm10"/>
    <property type="match status" value="1"/>
</dbReference>
<dbReference type="InterPro" id="IPR027539">
    <property type="entry name" value="Mdm10"/>
</dbReference>
<dbReference type="PANTHER" id="PTHR28035">
    <property type="entry name" value="MITOCHONDRIAL DISTRIBUTION AND MORPHOLOGY PROTEIN 10"/>
    <property type="match status" value="1"/>
</dbReference>
<dbReference type="PANTHER" id="PTHR28035:SF1">
    <property type="entry name" value="MITOCHONDRIAL DISTRIBUTION AND MORPHOLOGY PROTEIN 10"/>
    <property type="match status" value="1"/>
</dbReference>
<dbReference type="Pfam" id="PF12519">
    <property type="entry name" value="MDM10"/>
    <property type="match status" value="2"/>
</dbReference>
<sequence>MHPFASYVLRSYYKATGWNEDNLYANLTRSSNAILDFTVPRGLHLTVSKSPNALFKTTYSMTAMPSLHGSVGYIFTSCDLDVKSSGNVRFKNMIERFKVYDQPRRPEPKEEEWLAGEQVQKRDYLLYGRFYLPTGRLDALYSTRLSPTVQALVAAISDPPSNIPSELRDRNGDPSNIMLNLQHDVGKWCTEYTWSAEDGMWGVRVLHNFGRLGMSDAVEDGGGGKGDRTVKVKRVDEEDAVEGGLKGRVSMGAELYFSAKERSAGVSTGIRFTTLPDATPPSFQVPSSSSSSSNPVSPSTSQPPTTITALFNPMLGHMSGAYTARVSRDLALSSRFDFNVYSYESEWTMGAEWWLRRSLTPRPSEDGEIHPPTPPPFPPPVEDVQGVVKARASTNNDVSLMWEGRLRNMLVSLGVVSDFSSRSKPIKAIGLEVSYFSSE</sequence>
<keyword id="KW-0472">Membrane</keyword>
<keyword id="KW-0496">Mitochondrion</keyword>
<keyword id="KW-1000">Mitochondrion outer membrane</keyword>
<keyword id="KW-1185">Reference proteome</keyword>
<keyword id="KW-0812">Transmembrane</keyword>
<keyword id="KW-1134">Transmembrane beta strand</keyword>
<feature type="chain" id="PRO_0000384181" description="Mitochondrial distribution and morphology protein 10">
    <location>
        <begin position="1"/>
        <end position="439"/>
    </location>
</feature>
<feature type="region of interest" description="Disordered" evidence="2">
    <location>
        <begin position="275"/>
        <end position="305"/>
    </location>
</feature>
<feature type="compositionally biased region" description="Low complexity" evidence="2">
    <location>
        <begin position="280"/>
        <end position="305"/>
    </location>
</feature>
<reference key="1">
    <citation type="journal article" date="2008" name="Nature">
        <title>The genome of Laccaria bicolor provides insights into mycorrhizal symbiosis.</title>
        <authorList>
            <person name="Martin F."/>
            <person name="Aerts A."/>
            <person name="Ahren D."/>
            <person name="Brun A."/>
            <person name="Danchin E.G.J."/>
            <person name="Duchaussoy F."/>
            <person name="Gibon J."/>
            <person name="Kohler A."/>
            <person name="Lindquist E."/>
            <person name="Pereda V."/>
            <person name="Salamov A."/>
            <person name="Shapiro H.J."/>
            <person name="Wuyts J."/>
            <person name="Blaudez D."/>
            <person name="Buee M."/>
            <person name="Brokstein P."/>
            <person name="Canbaeck B."/>
            <person name="Cohen D."/>
            <person name="Courty P.E."/>
            <person name="Coutinho P.M."/>
            <person name="Delaruelle C."/>
            <person name="Detter J.C."/>
            <person name="Deveau A."/>
            <person name="DiFazio S."/>
            <person name="Duplessis S."/>
            <person name="Fraissinet-Tachet L."/>
            <person name="Lucic E."/>
            <person name="Frey-Klett P."/>
            <person name="Fourrey C."/>
            <person name="Feussner I."/>
            <person name="Gay G."/>
            <person name="Grimwood J."/>
            <person name="Hoegger P.J."/>
            <person name="Jain P."/>
            <person name="Kilaru S."/>
            <person name="Labbe J."/>
            <person name="Lin Y.C."/>
            <person name="Legue V."/>
            <person name="Le Tacon F."/>
            <person name="Marmeisse R."/>
            <person name="Melayah D."/>
            <person name="Montanini B."/>
            <person name="Muratet M."/>
            <person name="Nehls U."/>
            <person name="Niculita-Hirzel H."/>
            <person name="Oudot-Le Secq M.P."/>
            <person name="Peter M."/>
            <person name="Quesneville H."/>
            <person name="Rajashekar B."/>
            <person name="Reich M."/>
            <person name="Rouhier N."/>
            <person name="Schmutz J."/>
            <person name="Yin T."/>
            <person name="Chalot M."/>
            <person name="Henrissat B."/>
            <person name="Kuees U."/>
            <person name="Lucas S."/>
            <person name="Van de Peer Y."/>
            <person name="Podila G.K."/>
            <person name="Polle A."/>
            <person name="Pukkila P.J."/>
            <person name="Richardson P.M."/>
            <person name="Rouze P."/>
            <person name="Sanders I.R."/>
            <person name="Stajich J.E."/>
            <person name="Tunlid A."/>
            <person name="Tuskan G."/>
            <person name="Grigoriev I.V."/>
        </authorList>
    </citation>
    <scope>NUCLEOTIDE SEQUENCE [LARGE SCALE GENOMIC DNA]</scope>
    <source>
        <strain>S238N-H82 / ATCC MYA-4686</strain>
    </source>
</reference>
<name>MDM10_LACBS</name>
<evidence type="ECO:0000255" key="1">
    <source>
        <dbReference type="HAMAP-Rule" id="MF_03102"/>
    </source>
</evidence>
<evidence type="ECO:0000256" key="2">
    <source>
        <dbReference type="SAM" id="MobiDB-lite"/>
    </source>
</evidence>